<protein>
    <recommendedName>
        <fullName>Fumarate hydratase, mitochondrial</fullName>
        <shortName evidence="10">Fumarase</shortName>
        <ecNumber evidence="4 7 8">4.2.1.2</ecNumber>
    </recommendedName>
</protein>
<keyword id="KW-0002">3D-structure</keyword>
<keyword id="KW-0963">Cytoplasm</keyword>
<keyword id="KW-0903">Direct protein sequencing</keyword>
<keyword id="KW-0227">DNA damage</keyword>
<keyword id="KW-0234">DNA repair</keyword>
<keyword id="KW-0456">Lyase</keyword>
<keyword id="KW-0496">Mitochondrion</keyword>
<keyword id="KW-0539">Nucleus</keyword>
<keyword id="KW-0597">Phosphoprotein</keyword>
<keyword id="KW-1185">Reference proteome</keyword>
<keyword id="KW-0809">Transit peptide</keyword>
<keyword id="KW-0816">Tricarboxylic acid cycle</keyword>
<feature type="transit peptide" description="Mitochondrion" evidence="4">
    <location>
        <begin position="1"/>
        <end position="24"/>
    </location>
</feature>
<feature type="chain" id="PRO_0000010333" description="Fumarate hydratase, mitochondrial">
    <location>
        <begin position="25"/>
        <end position="488"/>
    </location>
</feature>
<feature type="active site" description="Proton donor/acceptor" evidence="1">
    <location>
        <position position="213"/>
    </location>
</feature>
<feature type="active site" evidence="2">
    <location>
        <position position="343"/>
    </location>
</feature>
<feature type="binding site" evidence="1">
    <location>
        <begin position="124"/>
        <end position="126"/>
    </location>
    <ligand>
        <name>substrate</name>
    </ligand>
</feature>
<feature type="binding site" description="in site B" evidence="1">
    <location>
        <begin position="154"/>
        <end position="157"/>
    </location>
    <ligand>
        <name>substrate</name>
    </ligand>
</feature>
<feature type="binding site" evidence="1">
    <location>
        <begin position="164"/>
        <end position="166"/>
    </location>
    <ligand>
        <name>substrate</name>
    </ligand>
</feature>
<feature type="binding site" evidence="2">
    <location>
        <position position="212"/>
    </location>
    <ligand>
        <name>substrate</name>
    </ligand>
</feature>
<feature type="binding site" evidence="2">
    <location>
        <position position="344"/>
    </location>
    <ligand>
        <name>substrate</name>
    </ligand>
</feature>
<feature type="binding site" evidence="2">
    <location>
        <begin position="349"/>
        <end position="351"/>
    </location>
    <ligand>
        <name>substrate</name>
    </ligand>
</feature>
<feature type="site" description="Important for catalytic activity" evidence="1">
    <location>
        <position position="356"/>
    </location>
</feature>
<feature type="modified residue" description="Phosphothreonine" evidence="13">
    <location>
        <position position="428"/>
    </location>
</feature>
<feature type="mutagenesis site" description="Does not affect processing by the mitochondrial processing peptidase. Localizes both in the mitochondrion and cytosol. Exhibits high fumarate hydratase activity." evidence="4">
    <original>MN</original>
    <variation>SF</variation>
    <location>
        <begin position="24"/>
        <end position="25"/>
    </location>
</feature>
<feature type="mutagenesis site" description="Does not affect processing by the mitochondrial processing peptidase. Localizes both in the mitochondrion and cytosol. Exhibits high fumarate hydratase activity." evidence="4">
    <original>M</original>
    <variation>S</variation>
    <location>
        <position position="24"/>
    </location>
</feature>
<feature type="mutagenesis site" description="Abolishes processing by the mitochondrial processing peptidase. Mainly localizes in the cytosol, with a small fraction in the mitochondrion. Reduced fumarate hydratase activity." evidence="4">
    <original>M</original>
    <variation>V</variation>
    <variation>I</variation>
    <location>
        <position position="24"/>
    </location>
</feature>
<feature type="mutagenesis site" description="Does not affect subcellular location." evidence="4">
    <location>
        <begin position="29"/>
        <end position="44"/>
    </location>
</feature>
<feature type="mutagenesis site" description="Abolished fumarate hydratase activity and ability to participate in DNA repair." evidence="7">
    <original>H</original>
    <variation>R</variation>
    <location>
        <position position="154"/>
    </location>
</feature>
<feature type="sequence conflict" description="In Ref. 1; AAA66909." evidence="11" ref="1">
    <original>M</original>
    <variation>V</variation>
    <location>
        <position position="173"/>
    </location>
</feature>
<feature type="sequence conflict" description="In Ref. 1; AAA66909." evidence="11" ref="1">
    <original>K</original>
    <variation>R</variation>
    <location>
        <position position="289"/>
    </location>
</feature>
<feature type="sequence conflict" description="In Ref. 1; AAA66909." evidence="11" ref="1">
    <original>A</original>
    <variation>V</variation>
    <location>
        <position position="392"/>
    </location>
</feature>
<feature type="strand" evidence="14">
    <location>
        <begin position="28"/>
        <end position="31"/>
    </location>
</feature>
<feature type="strand" evidence="14">
    <location>
        <begin position="33"/>
        <end position="35"/>
    </location>
</feature>
<feature type="strand" evidence="14">
    <location>
        <begin position="38"/>
        <end position="43"/>
    </location>
</feature>
<feature type="helix" evidence="14">
    <location>
        <begin position="48"/>
        <end position="54"/>
    </location>
</feature>
<feature type="helix" evidence="14">
    <location>
        <begin position="61"/>
        <end position="64"/>
    </location>
</feature>
<feature type="helix" evidence="14">
    <location>
        <begin position="68"/>
        <end position="87"/>
    </location>
</feature>
<feature type="helix" evidence="14">
    <location>
        <begin position="93"/>
        <end position="107"/>
    </location>
</feature>
<feature type="helix" evidence="14">
    <location>
        <begin position="112"/>
        <end position="114"/>
    </location>
</feature>
<feature type="strand" evidence="14">
    <location>
        <begin position="118"/>
        <end position="121"/>
    </location>
</feature>
<feature type="helix" evidence="14">
    <location>
        <begin position="126"/>
        <end position="142"/>
    </location>
</feature>
<feature type="helix" evidence="14">
    <location>
        <begin position="155"/>
        <end position="159"/>
    </location>
</feature>
<feature type="turn" evidence="14">
    <location>
        <begin position="160"/>
        <end position="162"/>
    </location>
</feature>
<feature type="helix" evidence="14">
    <location>
        <begin position="165"/>
        <end position="182"/>
    </location>
</feature>
<feature type="helix" evidence="14">
    <location>
        <begin position="185"/>
        <end position="202"/>
    </location>
</feature>
<feature type="turn" evidence="14">
    <location>
        <begin position="203"/>
        <end position="205"/>
    </location>
</feature>
<feature type="strand" evidence="14">
    <location>
        <begin position="207"/>
        <end position="212"/>
    </location>
</feature>
<feature type="strand" evidence="14">
    <location>
        <begin position="215"/>
        <end position="221"/>
    </location>
</feature>
<feature type="helix" evidence="14">
    <location>
        <begin position="222"/>
        <end position="247"/>
    </location>
</feature>
<feature type="turn" evidence="14">
    <location>
        <begin position="255"/>
        <end position="257"/>
    </location>
</feature>
<feature type="helix" evidence="14">
    <location>
        <begin position="267"/>
        <end position="279"/>
    </location>
</feature>
<feature type="helix" evidence="14">
    <location>
        <begin position="289"/>
        <end position="294"/>
    </location>
</feature>
<feature type="helix" evidence="14">
    <location>
        <begin position="297"/>
        <end position="323"/>
    </location>
</feature>
<feature type="strand" evidence="14">
    <location>
        <begin position="327"/>
        <end position="330"/>
    </location>
</feature>
<feature type="helix" evidence="14">
    <location>
        <begin position="353"/>
        <end position="377"/>
    </location>
</feature>
<feature type="helix" evidence="14">
    <location>
        <begin position="387"/>
        <end position="411"/>
    </location>
</feature>
<feature type="helix" evidence="14">
    <location>
        <begin position="413"/>
        <end position="415"/>
    </location>
</feature>
<feature type="helix" evidence="14">
    <location>
        <begin position="420"/>
        <end position="429"/>
    </location>
</feature>
<feature type="helix" evidence="14">
    <location>
        <begin position="432"/>
        <end position="434"/>
    </location>
</feature>
<feature type="turn" evidence="14">
    <location>
        <begin position="435"/>
        <end position="437"/>
    </location>
</feature>
<feature type="helix" evidence="14">
    <location>
        <begin position="438"/>
        <end position="440"/>
    </location>
</feature>
<feature type="helix" evidence="14">
    <location>
        <begin position="443"/>
        <end position="456"/>
    </location>
</feature>
<feature type="helix" evidence="14">
    <location>
        <begin position="460"/>
        <end position="466"/>
    </location>
</feature>
<feature type="helix" evidence="14">
    <location>
        <begin position="472"/>
        <end position="478"/>
    </location>
</feature>
<feature type="helix" evidence="14">
    <location>
        <begin position="481"/>
        <end position="483"/>
    </location>
</feature>
<reference key="1">
    <citation type="journal article" date="1987" name="J. Biol. Chem.">
        <title>Mitochondrial and cytoplasmic fumarases in Saccharomyces cerevisiae are encoded by a single nuclear gene FUM1.</title>
        <authorList>
            <person name="Wu M."/>
            <person name="Tzagoloff A."/>
        </authorList>
    </citation>
    <scope>NUCLEOTIDE SEQUENCE [GENOMIC DNA]</scope>
    <scope>SUBCELLULAR LOCATION</scope>
</reference>
<reference key="2">
    <citation type="journal article" date="1997" name="Nature">
        <title>The nucleotide sequence of Saccharomyces cerevisiae chromosome XVI.</title>
        <authorList>
            <person name="Bussey H."/>
            <person name="Storms R.K."/>
            <person name="Ahmed A."/>
            <person name="Albermann K."/>
            <person name="Allen E."/>
            <person name="Ansorge W."/>
            <person name="Araujo R."/>
            <person name="Aparicio A."/>
            <person name="Barrell B.G."/>
            <person name="Badcock K."/>
            <person name="Benes V."/>
            <person name="Botstein D."/>
            <person name="Bowman S."/>
            <person name="Brueckner M."/>
            <person name="Carpenter J."/>
            <person name="Cherry J.M."/>
            <person name="Chung E."/>
            <person name="Churcher C.M."/>
            <person name="Coster F."/>
            <person name="Davis K."/>
            <person name="Davis R.W."/>
            <person name="Dietrich F.S."/>
            <person name="Delius H."/>
            <person name="DiPaolo T."/>
            <person name="Dubois E."/>
            <person name="Duesterhoeft A."/>
            <person name="Duncan M."/>
            <person name="Floeth M."/>
            <person name="Fortin N."/>
            <person name="Friesen J.D."/>
            <person name="Fritz C."/>
            <person name="Goffeau A."/>
            <person name="Hall J."/>
            <person name="Hebling U."/>
            <person name="Heumann K."/>
            <person name="Hilbert H."/>
            <person name="Hillier L.W."/>
            <person name="Hunicke-Smith S."/>
            <person name="Hyman R.W."/>
            <person name="Johnston M."/>
            <person name="Kalman S."/>
            <person name="Kleine K."/>
            <person name="Komp C."/>
            <person name="Kurdi O."/>
            <person name="Lashkari D."/>
            <person name="Lew H."/>
            <person name="Lin A."/>
            <person name="Lin D."/>
            <person name="Louis E.J."/>
            <person name="Marathe R."/>
            <person name="Messenguy F."/>
            <person name="Mewes H.-W."/>
            <person name="Mirtipati S."/>
            <person name="Moestl D."/>
            <person name="Mueller-Auer S."/>
            <person name="Namath A."/>
            <person name="Nentwich U."/>
            <person name="Oefner P."/>
            <person name="Pearson D."/>
            <person name="Petel F.X."/>
            <person name="Pohl T.M."/>
            <person name="Purnelle B."/>
            <person name="Rajandream M.A."/>
            <person name="Rechmann S."/>
            <person name="Rieger M."/>
            <person name="Riles L."/>
            <person name="Roberts D."/>
            <person name="Schaefer M."/>
            <person name="Scharfe M."/>
            <person name="Scherens B."/>
            <person name="Schramm S."/>
            <person name="Schroeder M."/>
            <person name="Sdicu A.-M."/>
            <person name="Tettelin H."/>
            <person name="Urrestarazu L.A."/>
            <person name="Ushinsky S."/>
            <person name="Vierendeels F."/>
            <person name="Vissers S."/>
            <person name="Voss H."/>
            <person name="Walsh S.V."/>
            <person name="Wambutt R."/>
            <person name="Wang Y."/>
            <person name="Wedler E."/>
            <person name="Wedler H."/>
            <person name="Winnett E."/>
            <person name="Zhong W.-W."/>
            <person name="Zollner A."/>
            <person name="Vo D.H."/>
            <person name="Hani J."/>
        </authorList>
    </citation>
    <scope>NUCLEOTIDE SEQUENCE [LARGE SCALE GENOMIC DNA]</scope>
    <source>
        <strain>ATCC 204508 / S288c</strain>
    </source>
</reference>
<reference key="3">
    <citation type="journal article" date="2014" name="G3 (Bethesda)">
        <title>The reference genome sequence of Saccharomyces cerevisiae: Then and now.</title>
        <authorList>
            <person name="Engel S.R."/>
            <person name="Dietrich F.S."/>
            <person name="Fisk D.G."/>
            <person name="Binkley G."/>
            <person name="Balakrishnan R."/>
            <person name="Costanzo M.C."/>
            <person name="Dwight S.S."/>
            <person name="Hitz B.C."/>
            <person name="Karra K."/>
            <person name="Nash R.S."/>
            <person name="Weng S."/>
            <person name="Wong E.D."/>
            <person name="Lloyd P."/>
            <person name="Skrzypek M.S."/>
            <person name="Miyasato S.R."/>
            <person name="Simison M."/>
            <person name="Cherry J.M."/>
        </authorList>
    </citation>
    <scope>GENOME REANNOTATION</scope>
    <source>
        <strain>ATCC 204508 / S288c</strain>
    </source>
</reference>
<reference key="4">
    <citation type="journal article" date="2001" name="J. Biol. Chem.">
        <title>Mitochondrial and cytosolic isoforms of yeast fumarase are derivatives of a single translation product and have identical amino termini.</title>
        <authorList>
            <person name="Sass E."/>
            <person name="Blachinsky E."/>
            <person name="Karniely S."/>
            <person name="Pines O."/>
        </authorList>
    </citation>
    <scope>PROTEIN SEQUENCE OF 25-29</scope>
    <scope>FUNCTION</scope>
    <scope>CATALYTIC ACTIVITY</scope>
    <scope>SUBCELLULAR LOCATION</scope>
    <scope>MUTAGENESIS OF MET-24; 24-MET-ASN-25 AND 29-ARG--LYS-44</scope>
</reference>
<reference key="5">
    <citation type="journal article" date="2001" name="Biochemistry">
        <title>Yeast mitochondrial dehydrogenases are associated in a supramolecular complex.</title>
        <authorList>
            <person name="Grandier-Vazeille X."/>
            <person name="Bathany K."/>
            <person name="Chaignepain S."/>
            <person name="Camougrand N."/>
            <person name="Manon S."/>
            <person name="Schmitter J.-M."/>
        </authorList>
    </citation>
    <scope>PROTEIN SEQUENCE OF 44-52</scope>
    <scope>SUBCELLULAR LOCATION</scope>
    <source>
        <strain>ATCC 201238 / W303-1B</strain>
    </source>
</reference>
<reference key="6">
    <citation type="journal article" date="1992" name="FEMS Microbiol. Lett.">
        <title>Fumaric acid overproduction in yeast mutants deficient in fumarase.</title>
        <authorList>
            <person name="Kaclikova E."/>
            <person name="Lachowicz T.M."/>
            <person name="Gbelska Y."/>
            <person name="Subik J."/>
        </authorList>
    </citation>
    <scope>FUNCTION</scope>
    <scope>DISRUPTION PHENOTYPE</scope>
</reference>
<reference key="7">
    <citation type="journal article" date="2003" name="Nature">
        <title>Global analysis of protein expression in yeast.</title>
        <authorList>
            <person name="Ghaemmaghami S."/>
            <person name="Huh W.-K."/>
            <person name="Bower K."/>
            <person name="Howson R.W."/>
            <person name="Belle A."/>
            <person name="Dephoure N."/>
            <person name="O'Shea E.K."/>
            <person name="Weissman J.S."/>
        </authorList>
    </citation>
    <scope>LEVEL OF PROTEIN EXPRESSION [LARGE SCALE ANALYSIS]</scope>
</reference>
<reference key="8">
    <citation type="journal article" date="2007" name="Mol. Cell. Proteomics">
        <title>Profiling phosphoproteins of yeast mitochondria reveals a role of phosphorylation in assembly of the ATP synthase.</title>
        <authorList>
            <person name="Reinders J."/>
            <person name="Wagner K."/>
            <person name="Zahedi R.P."/>
            <person name="Stojanovski D."/>
            <person name="Eyrich B."/>
            <person name="van der Laan M."/>
            <person name="Rehling P."/>
            <person name="Sickmann A."/>
            <person name="Pfanner N."/>
            <person name="Meisinger C."/>
        </authorList>
    </citation>
    <scope>PHOSPHORYLATION [LARGE SCALE ANALYSIS] AT THR-428</scope>
    <scope>IDENTIFICATION BY MASS SPECTROMETRY [LARGE SCALE ANALYSIS]</scope>
    <source>
        <strain>ATCC 76625 / YPH499</strain>
    </source>
</reference>
<reference key="9">
    <citation type="journal article" date="2010" name="PLoS Biol.">
        <title>Fumarase: a mitochondrial metabolic enzyme and a cytosolic/nuclear component of the DNA damage response.</title>
        <authorList>
            <person name="Yogev O."/>
            <person name="Yogev O."/>
            <person name="Singer E."/>
            <person name="Shaulian E."/>
            <person name="Goldberg M."/>
            <person name="Fox T.D."/>
            <person name="Pines O."/>
        </authorList>
    </citation>
    <scope>FUNCTION</scope>
    <scope>CATALYTIC ACTIVITY</scope>
    <scope>PATHWAY</scope>
    <scope>SUBCELLULAR LOCATION</scope>
    <scope>MUTAGENESIS OF HIS-154</scope>
</reference>
<reference key="10">
    <citation type="journal article" date="1998" name="J. Mol. Biol.">
        <title>Crystal structures of native and recombinant yeast fumarase.</title>
        <authorList>
            <person name="Weaver T."/>
            <person name="Lees M."/>
            <person name="Zaitsev V."/>
            <person name="Zaitseva I."/>
            <person name="Duke E."/>
            <person name="Lindley P."/>
            <person name="McSweeny S."/>
            <person name="Svensson A."/>
            <person name="Keruchenko J."/>
            <person name="Keruchenko I."/>
            <person name="Gladilin K."/>
            <person name="Banaszak L."/>
        </authorList>
    </citation>
    <scope>X-RAY CRYSTALLOGRAPHY (2.6 ANGSTROMS)</scope>
    <scope>SUBUNIT</scope>
</reference>
<evidence type="ECO:0000250" key="1">
    <source>
        <dbReference type="UniProtKB" id="P05042"/>
    </source>
</evidence>
<evidence type="ECO:0000250" key="2">
    <source>
        <dbReference type="UniProtKB" id="P9WN93"/>
    </source>
</evidence>
<evidence type="ECO:0000269" key="3">
    <source>
    </source>
</evidence>
<evidence type="ECO:0000269" key="4">
    <source>
    </source>
</evidence>
<evidence type="ECO:0000269" key="5">
    <source>
    </source>
</evidence>
<evidence type="ECO:0000269" key="6">
    <source>
    </source>
</evidence>
<evidence type="ECO:0000269" key="7">
    <source>
    </source>
</evidence>
<evidence type="ECO:0000269" key="8">
    <source>
    </source>
</evidence>
<evidence type="ECO:0000269" key="9">
    <source>
    </source>
</evidence>
<evidence type="ECO:0000303" key="10">
    <source>
    </source>
</evidence>
<evidence type="ECO:0000305" key="11"/>
<evidence type="ECO:0000312" key="12">
    <source>
        <dbReference type="SGD" id="S000006183"/>
    </source>
</evidence>
<evidence type="ECO:0007744" key="13">
    <source>
    </source>
</evidence>
<evidence type="ECO:0007829" key="14">
    <source>
        <dbReference type="PDB" id="1YFM"/>
    </source>
</evidence>
<gene>
    <name evidence="10 12" type="primary">FUM1</name>
    <name type="ordered locus">YPL262W</name>
</gene>
<dbReference type="EC" id="4.2.1.2" evidence="4 7 8"/>
<dbReference type="EMBL" id="J02802">
    <property type="protein sequence ID" value="AAA66909.1"/>
    <property type="molecule type" value="Genomic_DNA"/>
</dbReference>
<dbReference type="EMBL" id="Z73618">
    <property type="protein sequence ID" value="CAA97997.1"/>
    <property type="molecule type" value="Genomic_DNA"/>
</dbReference>
<dbReference type="EMBL" id="BK006949">
    <property type="protein sequence ID" value="DAA11174.1"/>
    <property type="molecule type" value="Genomic_DNA"/>
</dbReference>
<dbReference type="PIR" id="S65295">
    <property type="entry name" value="UFBYM"/>
</dbReference>
<dbReference type="RefSeq" id="NP_015061.1">
    <property type="nucleotide sequence ID" value="NM_001184076.1"/>
</dbReference>
<dbReference type="PDB" id="1YFM">
    <property type="method" value="X-ray"/>
    <property type="resolution" value="2.60 A"/>
    <property type="chains" value="A=1-488"/>
</dbReference>
<dbReference type="PDBsum" id="1YFM"/>
<dbReference type="SMR" id="P08417"/>
<dbReference type="BioGRID" id="35951">
    <property type="interactions" value="459"/>
</dbReference>
<dbReference type="DIP" id="DIP-6451N"/>
<dbReference type="FunCoup" id="P08417">
    <property type="interactions" value="935"/>
</dbReference>
<dbReference type="IntAct" id="P08417">
    <property type="interactions" value="19"/>
</dbReference>
<dbReference type="MINT" id="P08417"/>
<dbReference type="STRING" id="4932.YPL262W"/>
<dbReference type="iPTMnet" id="P08417"/>
<dbReference type="PaxDb" id="4932-YPL262W"/>
<dbReference type="PeptideAtlas" id="P08417"/>
<dbReference type="EnsemblFungi" id="YPL262W_mRNA">
    <property type="protein sequence ID" value="YPL262W"/>
    <property type="gene ID" value="YPL262W"/>
</dbReference>
<dbReference type="GeneID" id="855866"/>
<dbReference type="KEGG" id="sce:YPL262W"/>
<dbReference type="AGR" id="SGD:S000006183"/>
<dbReference type="SGD" id="S000006183">
    <property type="gene designation" value="FUM1"/>
</dbReference>
<dbReference type="VEuPathDB" id="FungiDB:YPL262W"/>
<dbReference type="eggNOG" id="KOG1317">
    <property type="taxonomic scope" value="Eukaryota"/>
</dbReference>
<dbReference type="GeneTree" id="ENSGT00950000183122"/>
<dbReference type="HOGENOM" id="CLU_021594_4_0_1"/>
<dbReference type="InParanoid" id="P08417"/>
<dbReference type="OMA" id="PADRYFG"/>
<dbReference type="OrthoDB" id="1738025at2759"/>
<dbReference type="BioCyc" id="YEAST:YPL262W-MONOMER"/>
<dbReference type="BRENDA" id="4.2.1.2">
    <property type="organism ID" value="984"/>
</dbReference>
<dbReference type="Reactome" id="R-SCE-71403">
    <property type="pathway name" value="Citric acid cycle (TCA cycle)"/>
</dbReference>
<dbReference type="Reactome" id="R-SCE-9837999">
    <property type="pathway name" value="Mitochondrial protein degradation"/>
</dbReference>
<dbReference type="SABIO-RK" id="P08417"/>
<dbReference type="UniPathway" id="UPA00223">
    <property type="reaction ID" value="UER01007"/>
</dbReference>
<dbReference type="BioGRID-ORCS" id="855866">
    <property type="hits" value="10 hits in 10 CRISPR screens"/>
</dbReference>
<dbReference type="EvolutionaryTrace" id="P08417"/>
<dbReference type="PRO" id="PR:P08417"/>
<dbReference type="Proteomes" id="UP000002311">
    <property type="component" value="Chromosome XVI"/>
</dbReference>
<dbReference type="RNAct" id="P08417">
    <property type="molecule type" value="protein"/>
</dbReference>
<dbReference type="GO" id="GO:0005829">
    <property type="term" value="C:cytosol"/>
    <property type="evidence" value="ECO:0000314"/>
    <property type="project" value="UniProtKB"/>
</dbReference>
<dbReference type="GO" id="GO:0005759">
    <property type="term" value="C:mitochondrial matrix"/>
    <property type="evidence" value="ECO:0000314"/>
    <property type="project" value="SGD"/>
</dbReference>
<dbReference type="GO" id="GO:0005739">
    <property type="term" value="C:mitochondrion"/>
    <property type="evidence" value="ECO:0000314"/>
    <property type="project" value="UniProtKB"/>
</dbReference>
<dbReference type="GO" id="GO:0005634">
    <property type="term" value="C:nucleus"/>
    <property type="evidence" value="ECO:0000314"/>
    <property type="project" value="UniProtKB"/>
</dbReference>
<dbReference type="GO" id="GO:0004333">
    <property type="term" value="F:fumarate hydratase activity"/>
    <property type="evidence" value="ECO:0000314"/>
    <property type="project" value="UniProtKB"/>
</dbReference>
<dbReference type="GO" id="GO:0006974">
    <property type="term" value="P:DNA damage response"/>
    <property type="evidence" value="ECO:0000314"/>
    <property type="project" value="UniProtKB"/>
</dbReference>
<dbReference type="GO" id="GO:0006302">
    <property type="term" value="P:double-strand break repair"/>
    <property type="evidence" value="ECO:0000314"/>
    <property type="project" value="UniProtKB"/>
</dbReference>
<dbReference type="GO" id="GO:0006106">
    <property type="term" value="P:fumarate metabolic process"/>
    <property type="evidence" value="ECO:0000314"/>
    <property type="project" value="UniProtKB"/>
</dbReference>
<dbReference type="GO" id="GO:0006108">
    <property type="term" value="P:malate metabolic process"/>
    <property type="evidence" value="ECO:0000318"/>
    <property type="project" value="GO_Central"/>
</dbReference>
<dbReference type="GO" id="GO:0006099">
    <property type="term" value="P:tricarboxylic acid cycle"/>
    <property type="evidence" value="ECO:0000315"/>
    <property type="project" value="SGD"/>
</dbReference>
<dbReference type="CDD" id="cd01362">
    <property type="entry name" value="Fumarase_classII"/>
    <property type="match status" value="1"/>
</dbReference>
<dbReference type="FunFam" id="1.10.40.30:FF:000002">
    <property type="entry name" value="Fumarate hydratase class II"/>
    <property type="match status" value="1"/>
</dbReference>
<dbReference type="FunFam" id="1.10.275.10:FF:000001">
    <property type="entry name" value="Fumarate hydratase, mitochondrial"/>
    <property type="match status" value="1"/>
</dbReference>
<dbReference type="FunFam" id="1.20.200.10:FF:000001">
    <property type="entry name" value="Fumarate hydratase, mitochondrial"/>
    <property type="match status" value="1"/>
</dbReference>
<dbReference type="Gene3D" id="1.10.40.30">
    <property type="entry name" value="Fumarase/aspartase (C-terminal domain)"/>
    <property type="match status" value="1"/>
</dbReference>
<dbReference type="Gene3D" id="1.20.200.10">
    <property type="entry name" value="Fumarase/aspartase (Central domain)"/>
    <property type="match status" value="1"/>
</dbReference>
<dbReference type="Gene3D" id="1.10.275.10">
    <property type="entry name" value="Fumarase/aspartase (N-terminal domain)"/>
    <property type="match status" value="1"/>
</dbReference>
<dbReference type="HAMAP" id="MF_00743">
    <property type="entry name" value="FumaraseC"/>
    <property type="match status" value="1"/>
</dbReference>
<dbReference type="InterPro" id="IPR005677">
    <property type="entry name" value="Fum_hydII"/>
</dbReference>
<dbReference type="InterPro" id="IPR024083">
    <property type="entry name" value="Fumarase/histidase_N"/>
</dbReference>
<dbReference type="InterPro" id="IPR018951">
    <property type="entry name" value="Fumarase_C_C"/>
</dbReference>
<dbReference type="InterPro" id="IPR020557">
    <property type="entry name" value="Fumarate_lyase_CS"/>
</dbReference>
<dbReference type="InterPro" id="IPR000362">
    <property type="entry name" value="Fumarate_lyase_fam"/>
</dbReference>
<dbReference type="InterPro" id="IPR022761">
    <property type="entry name" value="Fumarate_lyase_N"/>
</dbReference>
<dbReference type="InterPro" id="IPR008948">
    <property type="entry name" value="L-Aspartase-like"/>
</dbReference>
<dbReference type="NCBIfam" id="TIGR00979">
    <property type="entry name" value="fumC_II"/>
    <property type="match status" value="1"/>
</dbReference>
<dbReference type="NCBIfam" id="NF008909">
    <property type="entry name" value="PRK12273.1"/>
    <property type="match status" value="1"/>
</dbReference>
<dbReference type="PANTHER" id="PTHR11444">
    <property type="entry name" value="ASPARTATEAMMONIA/ARGININOSUCCINATE/ADENYLOSUCCINATE LYASE"/>
    <property type="match status" value="1"/>
</dbReference>
<dbReference type="PANTHER" id="PTHR11444:SF1">
    <property type="entry name" value="FUMARATE HYDRATASE, MITOCHONDRIAL"/>
    <property type="match status" value="1"/>
</dbReference>
<dbReference type="Pfam" id="PF10415">
    <property type="entry name" value="FumaraseC_C"/>
    <property type="match status" value="1"/>
</dbReference>
<dbReference type="Pfam" id="PF00206">
    <property type="entry name" value="Lyase_1"/>
    <property type="match status" value="1"/>
</dbReference>
<dbReference type="PRINTS" id="PR00149">
    <property type="entry name" value="FUMRATELYASE"/>
</dbReference>
<dbReference type="SUPFAM" id="SSF48557">
    <property type="entry name" value="L-aspartase-like"/>
    <property type="match status" value="1"/>
</dbReference>
<dbReference type="PROSITE" id="PS00163">
    <property type="entry name" value="FUMARATE_LYASES"/>
    <property type="match status" value="1"/>
</dbReference>
<accession>P08417</accession>
<accession>D6W3A8</accession>
<accession>Q08978</accession>
<comment type="function">
    <text evidence="4 6 7 8">Catalyzes the reversible stereospecific interconversion of fumarate to L-malate (PubMed:11585823, PubMed:1587456, PubMed:20231875, PubMed:3040736). In mitochondrion, catalyzes the hydration of fumarate to L-malate in the tricarboxylic acid (TCA) cycle to facilitate a transition step in the production of energy in the form of NADH (PubMed:1587456, PubMed:20231875). In cytoplasm and nucleus, involved in DNA repair in response to DNA damage: following DNA double-strand breaks (DSBs), translocates from the cytosol to the nucleus and promotes DNA repair by catalyzing the dehydration of L-malate to fumarate (PubMed:20231875).</text>
</comment>
<comment type="catalytic activity">
    <reaction evidence="4 7 8">
        <text>(S)-malate = fumarate + H2O</text>
        <dbReference type="Rhea" id="RHEA:12460"/>
        <dbReference type="ChEBI" id="CHEBI:15377"/>
        <dbReference type="ChEBI" id="CHEBI:15589"/>
        <dbReference type="ChEBI" id="CHEBI:29806"/>
        <dbReference type="EC" id="4.2.1.2"/>
    </reaction>
    <physiologicalReaction direction="left-to-right" evidence="7">
        <dbReference type="Rhea" id="RHEA:12461"/>
    </physiologicalReaction>
    <physiologicalReaction direction="right-to-left" evidence="7">
        <dbReference type="Rhea" id="RHEA:12462"/>
    </physiologicalReaction>
</comment>
<comment type="pathway">
    <text evidence="7">Carbohydrate metabolism; tricarboxylic acid cycle; (S)-malate from fumarate: step 1/1.</text>
</comment>
<comment type="subunit">
    <text evidence="9">Homotetramer.</text>
</comment>
<comment type="interaction">
    <interactant intactId="EBI-7165">
        <id>P08417</id>
    </interactant>
    <interactant intactId="EBI-8637">
        <id>P0CS90</id>
        <label>SSC1</label>
    </interactant>
    <organismsDiffer>false</organismsDiffer>
    <experiments>2</experiments>
</comment>
<comment type="subcellular location">
    <subcellularLocation>
        <location evidence="3 4 7 8">Mitochondrion matrix</location>
    </subcellularLocation>
    <subcellularLocation>
        <location evidence="3 4 7 8">Cytoplasm</location>
    </subcellularLocation>
    <subcellularLocation>
        <location evidence="7">Nucleus</location>
    </subcellularLocation>
    <text evidence="4 7">Mitochondrial, cytoplasmic and nuclear forms are derived from a single translation product and not by alternative initiation of the transcript (PubMed:11585823). The mitochondrial transit peptide is cleaved by the mitochondrial processing peptidase, promoting mitochondrial targeting of around 70% of the proteins (PubMed:11585823). The remaining 30% of the processed proteins localize in the cytosol: they probably undergo rapid folding into an import-incompetent state, leading to retrograde movement of the processed proteins back to the cytosol through the translocation pore (PubMed:11585823). Translocates from the cytosol to the nucleus in response to DNA damage (PubMed:20231875).</text>
</comment>
<comment type="disruption phenotype">
    <text evidence="6">Cells accumulate extracellular fumarate.</text>
</comment>
<comment type="miscellaneous">
    <text evidence="5">Present with 6920 molecules/cell in log phase SD medium.</text>
</comment>
<comment type="miscellaneous">
    <text evidence="1 2">There are 2 substrate-binding sites: the catalytic A site, and the non-catalytic B site that may play a role in the transfer of substrate or product between the active site and the solvent. Alternatively, the B site may bind allosteric effectors.</text>
</comment>
<comment type="similarity">
    <text evidence="11">Belongs to the class-II fumarase/aspartase family. Fumarase subfamily.</text>
</comment>
<name>FUMH_YEAST</name>
<proteinExistence type="evidence at protein level"/>
<sequence length="488" mass="53152">MLRFTNCSCKTFVKSSYKLNIRRMNSSFRTETDAFGEIHVPADKYWGAQTQRSFQNFKIGGARERMPLPLVHAFGVLKKSAAIVNESLGGLDPKISKAIQQAADEVASGKLDDHFPLVVFQTGSGTQSNMNANEVISNRAIEILGGKIGSKQVHPNNHCNQSQSSNDTFPTVMHIAASLQIQNELIPELTNLKNALEAKSKEFDHIVKIGRTHLQDATPLTLGQEFSGYVQQVENGIQRVAHSLKTLSFLAQGGTAVGTGLNTKPGFDVKIAEQISKETGLKFQTAPNKFEALAAHDAIVECSGALNTLACSLFKIAQDIRYLGSGPRCGYHELMLPENEPGSSIMPGKVNPTQNEALTQVCVQVMGNNAAITFAGSQGQFELNVFKPVMIANLLNSIRLITDAAYSFRVHCVEGIKANEPRIHELLTKSLMLVTALNPKIGYDAASKVAKNAHKKGITLKESALELGVLTEKEFDEWVVPEHMLGPK</sequence>
<organism>
    <name type="scientific">Saccharomyces cerevisiae (strain ATCC 204508 / S288c)</name>
    <name type="common">Baker's yeast</name>
    <dbReference type="NCBI Taxonomy" id="559292"/>
    <lineage>
        <taxon>Eukaryota</taxon>
        <taxon>Fungi</taxon>
        <taxon>Dikarya</taxon>
        <taxon>Ascomycota</taxon>
        <taxon>Saccharomycotina</taxon>
        <taxon>Saccharomycetes</taxon>
        <taxon>Saccharomycetales</taxon>
        <taxon>Saccharomycetaceae</taxon>
        <taxon>Saccharomyces</taxon>
    </lineage>
</organism>